<sequence>MKTKTCKNLISNEQIQEVQEVYDTFKCRNGEMDKINIQYGFRALGVRLGEEEVEKIFKNQQYINFNSFLDIVTPLIYKIDVYASFEQAFSLFDRDGSGYITFDDLKTVAINLGEARSDSKLYNMIKRADLNGDKKISKIEFIQLLYWKKIY</sequence>
<accession>Q54IY3</accession>
<feature type="chain" id="PRO_0000328315" description="Centrin-A">
    <location>
        <begin position="1"/>
        <end position="151"/>
    </location>
</feature>
<feature type="domain" description="EF-hand 1" evidence="2">
    <location>
        <begin position="80"/>
        <end position="115"/>
    </location>
</feature>
<feature type="domain" description="EF-hand 2" evidence="2">
    <location>
        <begin position="116"/>
        <end position="151"/>
    </location>
</feature>
<feature type="binding site" evidence="2">
    <location>
        <position position="93"/>
    </location>
    <ligand>
        <name>Ca(2+)</name>
        <dbReference type="ChEBI" id="CHEBI:29108"/>
        <label>1</label>
    </ligand>
</feature>
<feature type="binding site" evidence="2">
    <location>
        <position position="95"/>
    </location>
    <ligand>
        <name>Ca(2+)</name>
        <dbReference type="ChEBI" id="CHEBI:29108"/>
        <label>1</label>
    </ligand>
</feature>
<feature type="binding site" evidence="2">
    <location>
        <position position="97"/>
    </location>
    <ligand>
        <name>Ca(2+)</name>
        <dbReference type="ChEBI" id="CHEBI:29108"/>
        <label>1</label>
    </ligand>
</feature>
<feature type="binding site" evidence="2">
    <location>
        <position position="99"/>
    </location>
    <ligand>
        <name>Ca(2+)</name>
        <dbReference type="ChEBI" id="CHEBI:29108"/>
        <label>1</label>
    </ligand>
</feature>
<feature type="binding site" evidence="2">
    <location>
        <position position="104"/>
    </location>
    <ligand>
        <name>Ca(2+)</name>
        <dbReference type="ChEBI" id="CHEBI:29108"/>
        <label>1</label>
    </ligand>
</feature>
<feature type="binding site" evidence="2">
    <location>
        <position position="129"/>
    </location>
    <ligand>
        <name>Ca(2+)</name>
        <dbReference type="ChEBI" id="CHEBI:29108"/>
        <label>2</label>
    </ligand>
</feature>
<feature type="binding site" evidence="2">
    <location>
        <position position="131"/>
    </location>
    <ligand>
        <name>Ca(2+)</name>
        <dbReference type="ChEBI" id="CHEBI:29108"/>
        <label>2</label>
    </ligand>
</feature>
<feature type="binding site" evidence="2">
    <location>
        <position position="133"/>
    </location>
    <ligand>
        <name>Ca(2+)</name>
        <dbReference type="ChEBI" id="CHEBI:29108"/>
        <label>2</label>
    </ligand>
</feature>
<feature type="binding site" evidence="2">
    <location>
        <position position="135"/>
    </location>
    <ligand>
        <name>Ca(2+)</name>
        <dbReference type="ChEBI" id="CHEBI:29108"/>
        <label>2</label>
    </ligand>
</feature>
<feature type="binding site" evidence="2">
    <location>
        <position position="140"/>
    </location>
    <ligand>
        <name>Ca(2+)</name>
        <dbReference type="ChEBI" id="CHEBI:29108"/>
        <label>2</label>
    </ligand>
</feature>
<organism>
    <name type="scientific">Dictyostelium discoideum</name>
    <name type="common">Social amoeba</name>
    <dbReference type="NCBI Taxonomy" id="44689"/>
    <lineage>
        <taxon>Eukaryota</taxon>
        <taxon>Amoebozoa</taxon>
        <taxon>Evosea</taxon>
        <taxon>Eumycetozoa</taxon>
        <taxon>Dictyostelia</taxon>
        <taxon>Dictyosteliales</taxon>
        <taxon>Dictyosteliaceae</taxon>
        <taxon>Dictyostelium</taxon>
    </lineage>
</organism>
<evidence type="ECO:0000250" key="1"/>
<evidence type="ECO:0000255" key="2">
    <source>
        <dbReference type="PROSITE-ProRule" id="PRU00448"/>
    </source>
</evidence>
<evidence type="ECO:0000269" key="3">
    <source>
    </source>
</evidence>
<evidence type="ECO:0000305" key="4"/>
<reference key="1">
    <citation type="journal article" date="2005" name="Nature">
        <title>The genome of the social amoeba Dictyostelium discoideum.</title>
        <authorList>
            <person name="Eichinger L."/>
            <person name="Pachebat J.A."/>
            <person name="Gloeckner G."/>
            <person name="Rajandream M.A."/>
            <person name="Sucgang R."/>
            <person name="Berriman M."/>
            <person name="Song J."/>
            <person name="Olsen R."/>
            <person name="Szafranski K."/>
            <person name="Xu Q."/>
            <person name="Tunggal B."/>
            <person name="Kummerfeld S."/>
            <person name="Madera M."/>
            <person name="Konfortov B.A."/>
            <person name="Rivero F."/>
            <person name="Bankier A.T."/>
            <person name="Lehmann R."/>
            <person name="Hamlin N."/>
            <person name="Davies R."/>
            <person name="Gaudet P."/>
            <person name="Fey P."/>
            <person name="Pilcher K."/>
            <person name="Chen G."/>
            <person name="Saunders D."/>
            <person name="Sodergren E.J."/>
            <person name="Davis P."/>
            <person name="Kerhornou A."/>
            <person name="Nie X."/>
            <person name="Hall N."/>
            <person name="Anjard C."/>
            <person name="Hemphill L."/>
            <person name="Bason N."/>
            <person name="Farbrother P."/>
            <person name="Desany B."/>
            <person name="Just E."/>
            <person name="Morio T."/>
            <person name="Rost R."/>
            <person name="Churcher C.M."/>
            <person name="Cooper J."/>
            <person name="Haydock S."/>
            <person name="van Driessche N."/>
            <person name="Cronin A."/>
            <person name="Goodhead I."/>
            <person name="Muzny D.M."/>
            <person name="Mourier T."/>
            <person name="Pain A."/>
            <person name="Lu M."/>
            <person name="Harper D."/>
            <person name="Lindsay R."/>
            <person name="Hauser H."/>
            <person name="James K.D."/>
            <person name="Quiles M."/>
            <person name="Madan Babu M."/>
            <person name="Saito T."/>
            <person name="Buchrieser C."/>
            <person name="Wardroper A."/>
            <person name="Felder M."/>
            <person name="Thangavelu M."/>
            <person name="Johnson D."/>
            <person name="Knights A."/>
            <person name="Loulseged H."/>
            <person name="Mungall K.L."/>
            <person name="Oliver K."/>
            <person name="Price C."/>
            <person name="Quail M.A."/>
            <person name="Urushihara H."/>
            <person name="Hernandez J."/>
            <person name="Rabbinowitsch E."/>
            <person name="Steffen D."/>
            <person name="Sanders M."/>
            <person name="Ma J."/>
            <person name="Kohara Y."/>
            <person name="Sharp S."/>
            <person name="Simmonds M.N."/>
            <person name="Spiegler S."/>
            <person name="Tivey A."/>
            <person name="Sugano S."/>
            <person name="White B."/>
            <person name="Walker D."/>
            <person name="Woodward J.R."/>
            <person name="Winckler T."/>
            <person name="Tanaka Y."/>
            <person name="Shaulsky G."/>
            <person name="Schleicher M."/>
            <person name="Weinstock G.M."/>
            <person name="Rosenthal A."/>
            <person name="Cox E.C."/>
            <person name="Chisholm R.L."/>
            <person name="Gibbs R.A."/>
            <person name="Loomis W.F."/>
            <person name="Platzer M."/>
            <person name="Kay R.R."/>
            <person name="Williams J.G."/>
            <person name="Dear P.H."/>
            <person name="Noegel A.A."/>
            <person name="Barrell B.G."/>
            <person name="Kuspa A."/>
        </authorList>
    </citation>
    <scope>NUCLEOTIDE SEQUENCE [LARGE SCALE GENOMIC DNA]</scope>
    <source>
        <strain>AX4</strain>
    </source>
</reference>
<reference key="2">
    <citation type="journal article" date="2001" name="Eur. J. Cell Biol.">
        <title>Dictyostelium centrin-related protein (DdCrp), the most divergent member of the centrin family, possesses only two EF hands and dissociates from the centrosome during mitosis.</title>
        <authorList>
            <person name="Daunderer C."/>
            <person name="Schliwa M."/>
            <person name="Graef R."/>
        </authorList>
    </citation>
    <scope>SUBCELLULAR LOCATION</scope>
</reference>
<comment type="function">
    <text evidence="1">Plays a fundamental role in microtubule-organizing center structure and function.</text>
</comment>
<comment type="subcellular location">
    <subcellularLocation>
        <location evidence="3">Cytoplasm</location>
        <location evidence="3">Cytoskeleton</location>
        <location evidence="3">Microtubule organizing center</location>
        <location evidence="3">Centrosome</location>
    </subcellularLocation>
    <subcellularLocation>
        <location evidence="3">Nucleus</location>
    </subcellularLocation>
    <text>Dissociates from the centrosome during prometaphase.</text>
</comment>
<comment type="miscellaneous">
    <text evidence="1">Binds two moles of calcium per mole of protein.</text>
</comment>
<comment type="similarity">
    <text evidence="4">Belongs to the centrin family.</text>
</comment>
<proteinExistence type="inferred from homology"/>
<gene>
    <name type="primary">cenA</name>
    <name type="ORF">DDB_G0288427</name>
</gene>
<name>CETNA_DICDI</name>
<protein>
    <recommendedName>
        <fullName>Centrin-A</fullName>
    </recommendedName>
    <alternativeName>
        <fullName>Ddcrp</fullName>
    </alternativeName>
</protein>
<dbReference type="EMBL" id="AAFI02000111">
    <property type="protein sequence ID" value="EAL63239.1"/>
    <property type="molecule type" value="Genomic_DNA"/>
</dbReference>
<dbReference type="RefSeq" id="XP_636747.1">
    <property type="nucleotide sequence ID" value="XM_631655.1"/>
</dbReference>
<dbReference type="SMR" id="Q54IY3"/>
<dbReference type="FunCoup" id="Q54IY3">
    <property type="interactions" value="37"/>
</dbReference>
<dbReference type="STRING" id="44689.Q54IY3"/>
<dbReference type="PaxDb" id="44689-DDB0219932"/>
<dbReference type="EnsemblProtists" id="EAL63239">
    <property type="protein sequence ID" value="EAL63239"/>
    <property type="gene ID" value="DDB_G0288427"/>
</dbReference>
<dbReference type="GeneID" id="8626625"/>
<dbReference type="KEGG" id="ddi:DDB_G0288427"/>
<dbReference type="dictyBase" id="DDB_G0288427">
    <property type="gene designation" value="cenA"/>
</dbReference>
<dbReference type="VEuPathDB" id="AmoebaDB:DDB_G0288427"/>
<dbReference type="eggNOG" id="KOG0028">
    <property type="taxonomic scope" value="Eukaryota"/>
</dbReference>
<dbReference type="HOGENOM" id="CLU_061288_18_2_1"/>
<dbReference type="InParanoid" id="Q54IY3"/>
<dbReference type="OMA" id="SIMDPAK"/>
<dbReference type="PhylomeDB" id="Q54IY3"/>
<dbReference type="Reactome" id="R-DDI-5696394">
    <property type="pathway name" value="DNA Damage Recognition in GG-NER"/>
</dbReference>
<dbReference type="Reactome" id="R-DDI-5696395">
    <property type="pathway name" value="Formation of Incision Complex in GG-NER"/>
</dbReference>
<dbReference type="Reactome" id="R-DDI-9646399">
    <property type="pathway name" value="Aggrephagy"/>
</dbReference>
<dbReference type="PRO" id="PR:Q54IY3"/>
<dbReference type="Proteomes" id="UP000002195">
    <property type="component" value="Chromosome 5"/>
</dbReference>
<dbReference type="GO" id="GO:0005814">
    <property type="term" value="C:centriole"/>
    <property type="evidence" value="ECO:0000318"/>
    <property type="project" value="GO_Central"/>
</dbReference>
<dbReference type="GO" id="GO:0005813">
    <property type="term" value="C:centrosome"/>
    <property type="evidence" value="ECO:0000314"/>
    <property type="project" value="dictyBase"/>
</dbReference>
<dbReference type="GO" id="GO:0005737">
    <property type="term" value="C:cytoplasm"/>
    <property type="evidence" value="ECO:0007669"/>
    <property type="project" value="UniProtKB-KW"/>
</dbReference>
<dbReference type="GO" id="GO:0005634">
    <property type="term" value="C:nucleus"/>
    <property type="evidence" value="ECO:0000314"/>
    <property type="project" value="dictyBase"/>
</dbReference>
<dbReference type="GO" id="GO:0005509">
    <property type="term" value="F:calcium ion binding"/>
    <property type="evidence" value="ECO:0000318"/>
    <property type="project" value="GO_Central"/>
</dbReference>
<dbReference type="GO" id="GO:0051301">
    <property type="term" value="P:cell division"/>
    <property type="evidence" value="ECO:0007669"/>
    <property type="project" value="UniProtKB-KW"/>
</dbReference>
<dbReference type="GO" id="GO:0000226">
    <property type="term" value="P:microtubule cytoskeleton organization"/>
    <property type="evidence" value="ECO:0000318"/>
    <property type="project" value="GO_Central"/>
</dbReference>
<dbReference type="CDD" id="cd00051">
    <property type="entry name" value="EFh"/>
    <property type="match status" value="1"/>
</dbReference>
<dbReference type="FunFam" id="1.10.238.10:FF:000362">
    <property type="entry name" value="Centrin-4"/>
    <property type="match status" value="1"/>
</dbReference>
<dbReference type="Gene3D" id="1.10.238.10">
    <property type="entry name" value="EF-hand"/>
    <property type="match status" value="2"/>
</dbReference>
<dbReference type="InterPro" id="IPR050145">
    <property type="entry name" value="Centrin_CML-like"/>
</dbReference>
<dbReference type="InterPro" id="IPR011992">
    <property type="entry name" value="EF-hand-dom_pair"/>
</dbReference>
<dbReference type="InterPro" id="IPR018247">
    <property type="entry name" value="EF_Hand_1_Ca_BS"/>
</dbReference>
<dbReference type="InterPro" id="IPR002048">
    <property type="entry name" value="EF_hand_dom"/>
</dbReference>
<dbReference type="PANTHER" id="PTHR23050">
    <property type="entry name" value="CALCIUM BINDING PROTEIN"/>
    <property type="match status" value="1"/>
</dbReference>
<dbReference type="Pfam" id="PF13499">
    <property type="entry name" value="EF-hand_7"/>
    <property type="match status" value="1"/>
</dbReference>
<dbReference type="SMART" id="SM00054">
    <property type="entry name" value="EFh"/>
    <property type="match status" value="2"/>
</dbReference>
<dbReference type="SUPFAM" id="SSF47473">
    <property type="entry name" value="EF-hand"/>
    <property type="match status" value="1"/>
</dbReference>
<dbReference type="PROSITE" id="PS00018">
    <property type="entry name" value="EF_HAND_1"/>
    <property type="match status" value="2"/>
</dbReference>
<dbReference type="PROSITE" id="PS50222">
    <property type="entry name" value="EF_HAND_2"/>
    <property type="match status" value="2"/>
</dbReference>
<keyword id="KW-0106">Calcium</keyword>
<keyword id="KW-0131">Cell cycle</keyword>
<keyword id="KW-0132">Cell division</keyword>
<keyword id="KW-0963">Cytoplasm</keyword>
<keyword id="KW-0206">Cytoskeleton</keyword>
<keyword id="KW-0479">Metal-binding</keyword>
<keyword id="KW-0498">Mitosis</keyword>
<keyword id="KW-0539">Nucleus</keyword>
<keyword id="KW-1185">Reference proteome</keyword>
<keyword id="KW-0677">Repeat</keyword>